<proteinExistence type="inferred from homology"/>
<protein>
    <recommendedName>
        <fullName evidence="2">Virion infectivity factor</fullName>
        <shortName evidence="2">Vif</shortName>
    </recommendedName>
    <alternativeName>
        <fullName evidence="2">SOR protein</fullName>
    </alternativeName>
    <component>
        <recommendedName>
            <fullName evidence="2">p17</fullName>
        </recommendedName>
    </component>
    <component>
        <recommendedName>
            <fullName evidence="2">p7</fullName>
        </recommendedName>
    </component>
</protein>
<keyword id="KW-0014">AIDS</keyword>
<keyword id="KW-1032">Host cell membrane</keyword>
<keyword id="KW-1035">Host cytoplasm</keyword>
<keyword id="KW-1043">Host membrane</keyword>
<keyword id="KW-0945">Host-virus interaction</keyword>
<keyword id="KW-0472">Membrane</keyword>
<keyword id="KW-0479">Metal-binding</keyword>
<keyword id="KW-0597">Phosphoprotein</keyword>
<keyword id="KW-1185">Reference proteome</keyword>
<keyword id="KW-0694">RNA-binding</keyword>
<keyword id="KW-0832">Ubl conjugation</keyword>
<keyword id="KW-0833">Ubl conjugation pathway</keyword>
<keyword id="KW-0946">Virion</keyword>
<keyword id="KW-0862">Zinc</keyword>
<comment type="function">
    <text evidence="2">Counteracts the innate antiviral activity of host APOBEC3F and APOBEC3G by promoting their ubiquitination and degradation. Acts as a substrate recognition component of an E3 ubiquitin-protein ligase complex: mechanistically, Vif hijacks a host cullin-5-RING E3 ubiquitin-protein ligase complex (ECS complex) and the transcription coactivator CBFB/CBF-beta to form an active E3 ubiquitin-protein ligase complex that targets APOBEC3G and APOBEC3F for polyubiquitination, leading to their degradation by the proteasome. Vif interaction with APOBEC3G also blocks its cytidine deaminase activity in a proteasome-independent manner, suggesting a dual inhibitory mechanism. May interact directly with APOBEC3G mRNA in order to inhibit its translation. Association with CBFB/CBF-beta also inhibits the transcription coactivator activity of CBFB/CBF-beta. Seems to play a role in viral morphology by affecting the stability of the viral nucleoprotein core. Finally, Vif also contributes to the G2 cell cycle arrest observed in HIV infected cells.</text>
</comment>
<comment type="subunit">
    <text evidence="1">Homomultimer; in vitro and presumably in vivo. Interacts with viral RNA and Pr55Gag precursor; these interactions mediate Vif incorporation into the virion. Interacts with the viral reverse transcriptase. Forms cullin-5-RING E3 ubiquitin-protein ligase complex (ECS complex) by interacting with host CUL5, RBX2, elongin BC complex (ELOB and ELOC) and CBFB/CBF-beta. Within the ECS complex, Vif interacts directly with host CUL5, ELOC and APOBEC (APOBEC3F and APOBEC3G) substrates. The ECS complex also contains some single-stranded RNA (ssRNA) that acts as a glue that bridges Vif with APOBEC (APOBEC3F and APOBEC3G) substrates. Interacts with host UBCE7IP1 isoform 3/ZIN and possibly with SAT. Interacts with host tyrosine kinases HCK and FYN; these interactions may decrease level of phosphorylated APOBEC3G incorporation into virions. Interacts with host ABCE1; this interaction may play a role in protecting viral RNA from damage during viral assembly. Interacts with host MDM2; this interaction targets Vif for degradation by the proteasome.</text>
</comment>
<comment type="subcellular location">
    <subcellularLocation>
        <location evidence="2">Host cytoplasm</location>
    </subcellularLocation>
    <subcellularLocation>
        <location evidence="2">Host cell membrane</location>
        <topology evidence="2">Peripheral membrane protein</topology>
        <orientation evidence="2">Cytoplasmic side</orientation>
    </subcellularLocation>
    <subcellularLocation>
        <location evidence="2">Virion</location>
    </subcellularLocation>
    <text evidence="2">In the cytoplasm, seems to colocalize with intermediate filament vimentin. A fraction is associated with the cytoplasmic side of cellular membranes, presumably via the interaction with Pr55Gag precursor. Incorporated in virions at a ratio of approximately 7 to 20 molecules per virion.</text>
</comment>
<comment type="induction">
    <text evidence="2">Expressed late during infection in a Rev-dependent manner.</text>
</comment>
<comment type="domain">
    <text evidence="2">The BC-like-box motif mediates the interaction with elongin BC complex.</text>
</comment>
<comment type="domain">
    <text evidence="2">The HCCH motif (H-x(5)-C-x(18)-C-x(5)-H) mediates the interaction with CUL5.</text>
</comment>
<comment type="PTM">
    <text evidence="2">Processed in virion by the viral protease.</text>
</comment>
<comment type="PTM">
    <text evidence="2">Highly phosphorylated on serine and threonine residues.</text>
</comment>
<comment type="PTM">
    <text evidence="2">Polyubiquitinated and degraded by the proteasome in the presence of APOBEC3G.</text>
</comment>
<comment type="miscellaneous">
    <text evidence="2">Vif-defective viruses show catastrophic failure in reverse transcription due to APOBEC-induced mutations that initiate a DNA base repair pathway and compromise the structural integrity of the ssDNA. In the absence of Vif, the virion is morphologically abnormal.</text>
</comment>
<comment type="miscellaneous">
    <text evidence="2">HIV-1 lineages are divided in three main groups, M (for Major), O (for Outlier), and N (for New, or Non-M, Non-O). The vast majority of strains found worldwide belong to the group M. Group O seems to be endemic to and largely confined to Cameroon and neighboring countries in West Central Africa, where these viruses represent a small minority of HIV-1 strains. The group N is represented by a limited number of isolates from Cameroonian persons. The group M is further subdivided in 9 clades or subtypes (A to D, F to H, J and K).</text>
</comment>
<comment type="miscellaneous">
    <text evidence="2">Required for replication in 'nonpermissive' cells, including primary T-cells, macrophages and certain T-cell lines, but is dispensable for replication in 'permissive' cell lines, such as 293T cells. In nonpermissive cells, Vif-defective viruses can produce virions, but they fail to complete reverse transcription and cannot successfully infect new cells.</text>
</comment>
<comment type="similarity">
    <text evidence="2">Belongs to the primate lentivirus group Vif protein family.</text>
</comment>
<reference key="1">
    <citation type="journal article" date="1998" name="Nat. Med.">
        <title>Identification of a new human immunodeficiency virus type 1 distinct from group M and group O.</title>
        <authorList>
            <person name="Simon F."/>
            <person name="Mauclere P."/>
            <person name="Roques P."/>
            <person name="Loussert-Ajaka I."/>
            <person name="Muller-Trutwin M.C."/>
            <person name="Saragosti S."/>
            <person name="Georges-Courbot M.C."/>
            <person name="Barre-Sinoussi F."/>
            <person name="Brun-Vezinet F."/>
        </authorList>
    </citation>
    <scope>NUCLEOTIDE SEQUENCE [GENOMIC DNA]</scope>
</reference>
<gene>
    <name evidence="2" type="primary">vif</name>
</gene>
<sequence length="192" mass="22603">MENRWQVMVVWQVDRMKIRKWNSLVKHHMYVSKKAKGWYYRHHYETHHPKISSEVHIPVGQARLVTVTYWGLTTGEQSWHLGHGVSIEWRLRKYKTQVDPEMADKLIHLHYFDCFTASAIRQAVLGRPVLPRCEYPAGHKQVGTLQYLALTAWVGAKKRKPPLPSVTKLTEDRWNEHQKMQGHRGNPIMNGH</sequence>
<accession>O91081</accession>
<name>VIF_HV1YF</name>
<organism>
    <name type="scientific">Human immunodeficiency virus type 1 group N (isolate YBF30)</name>
    <name type="common">HIV-1</name>
    <dbReference type="NCBI Taxonomy" id="388818"/>
    <lineage>
        <taxon>Viruses</taxon>
        <taxon>Riboviria</taxon>
        <taxon>Pararnavirae</taxon>
        <taxon>Artverviricota</taxon>
        <taxon>Revtraviricetes</taxon>
        <taxon>Ortervirales</taxon>
        <taxon>Retroviridae</taxon>
        <taxon>Orthoretrovirinae</taxon>
        <taxon>Lentivirus</taxon>
        <taxon>Human immunodeficiency virus type 1</taxon>
    </lineage>
</organism>
<organismHost>
    <name type="scientific">Homo sapiens</name>
    <name type="common">Human</name>
    <dbReference type="NCBI Taxonomy" id="9606"/>
</organismHost>
<dbReference type="EMBL" id="AJ006022">
    <property type="protein sequence ID" value="CAA06811.1"/>
    <property type="molecule type" value="Genomic_DNA"/>
</dbReference>
<dbReference type="SMR" id="O91081"/>
<dbReference type="Proteomes" id="UP000007420">
    <property type="component" value="Segment"/>
</dbReference>
<dbReference type="GO" id="GO:0030430">
    <property type="term" value="C:host cell cytoplasm"/>
    <property type="evidence" value="ECO:0007669"/>
    <property type="project" value="UniProtKB-SubCell"/>
</dbReference>
<dbReference type="GO" id="GO:0020002">
    <property type="term" value="C:host cell plasma membrane"/>
    <property type="evidence" value="ECO:0007669"/>
    <property type="project" value="UniProtKB-SubCell"/>
</dbReference>
<dbReference type="GO" id="GO:0016020">
    <property type="term" value="C:membrane"/>
    <property type="evidence" value="ECO:0007669"/>
    <property type="project" value="UniProtKB-UniRule"/>
</dbReference>
<dbReference type="GO" id="GO:0044423">
    <property type="term" value="C:virion component"/>
    <property type="evidence" value="ECO:0007669"/>
    <property type="project" value="UniProtKB-UniRule"/>
</dbReference>
<dbReference type="GO" id="GO:0046872">
    <property type="term" value="F:metal ion binding"/>
    <property type="evidence" value="ECO:0007669"/>
    <property type="project" value="UniProtKB-KW"/>
</dbReference>
<dbReference type="GO" id="GO:0003723">
    <property type="term" value="F:RNA binding"/>
    <property type="evidence" value="ECO:0007669"/>
    <property type="project" value="UniProtKB-UniRule"/>
</dbReference>
<dbReference type="GO" id="GO:0019058">
    <property type="term" value="P:viral life cycle"/>
    <property type="evidence" value="ECO:0007669"/>
    <property type="project" value="InterPro"/>
</dbReference>
<dbReference type="HAMAP" id="MF_04081">
    <property type="entry name" value="HIV_VIF"/>
    <property type="match status" value="1"/>
</dbReference>
<dbReference type="InterPro" id="IPR000475">
    <property type="entry name" value="Vif"/>
</dbReference>
<dbReference type="Pfam" id="PF00559">
    <property type="entry name" value="Vif"/>
    <property type="match status" value="1"/>
</dbReference>
<dbReference type="PRINTS" id="PR00349">
    <property type="entry name" value="VIRIONINFFCT"/>
</dbReference>
<feature type="chain" id="PRO_0000245151" description="Virion infectivity factor" evidence="2">
    <location>
        <begin position="1"/>
        <end position="192"/>
    </location>
</feature>
<feature type="chain" id="PRO_0000245152" description="p17" evidence="2">
    <location>
        <begin position="1"/>
        <end position="150"/>
    </location>
</feature>
<feature type="chain" id="PRO_0000245153" description="p7" evidence="2">
    <location>
        <begin position="151"/>
        <end position="192"/>
    </location>
</feature>
<feature type="region of interest" description="Interaction with host APOBEC3F; F1-box" evidence="2">
    <location>
        <begin position="14"/>
        <end position="17"/>
    </location>
</feature>
<feature type="region of interest" description="Interaction with host APOBEC3G; G-box" evidence="2">
    <location>
        <begin position="40"/>
        <end position="44"/>
    </location>
</feature>
<feature type="region of interest" description="Interaction with host APOBEC3F and APOBEC3G; FG-box" evidence="2">
    <location>
        <begin position="54"/>
        <end position="72"/>
    </location>
</feature>
<feature type="region of interest" description="Interaction with host APOBEC3F; F2-box" evidence="2">
    <location>
        <begin position="74"/>
        <end position="79"/>
    </location>
</feature>
<feature type="region of interest" description="RNA-binding" evidence="2">
    <location>
        <begin position="75"/>
        <end position="114"/>
    </location>
</feature>
<feature type="region of interest" description="SOCS box-like" evidence="2">
    <location>
        <begin position="151"/>
        <end position="180"/>
    </location>
</feature>
<feature type="region of interest" description="Multimerization" evidence="2">
    <location>
        <begin position="151"/>
        <end position="164"/>
    </location>
</feature>
<feature type="region of interest" description="Membrane association" evidence="2">
    <location>
        <begin position="171"/>
        <end position="172"/>
    </location>
</feature>
<feature type="short sequence motif" description="HCCH motif" evidence="2">
    <location>
        <begin position="108"/>
        <end position="139"/>
    </location>
</feature>
<feature type="short sequence motif" description="BC-box-like motif" evidence="2">
    <location>
        <begin position="144"/>
        <end position="153"/>
    </location>
</feature>
<feature type="binding site" evidence="2">
    <location>
        <position position="108"/>
    </location>
    <ligand>
        <name>Zn(2+)</name>
        <dbReference type="ChEBI" id="CHEBI:29105"/>
    </ligand>
</feature>
<feature type="binding site" evidence="2">
    <location>
        <position position="114"/>
    </location>
    <ligand>
        <name>Zn(2+)</name>
        <dbReference type="ChEBI" id="CHEBI:29105"/>
    </ligand>
</feature>
<feature type="binding site" evidence="2">
    <location>
        <position position="133"/>
    </location>
    <ligand>
        <name>Zn(2+)</name>
        <dbReference type="ChEBI" id="CHEBI:29105"/>
    </ligand>
</feature>
<feature type="binding site" evidence="2">
    <location>
        <position position="139"/>
    </location>
    <ligand>
        <name>Zn(2+)</name>
        <dbReference type="ChEBI" id="CHEBI:29105"/>
    </ligand>
</feature>
<feature type="site" description="Cleavage in virion (by viral protease)" evidence="2">
    <location>
        <begin position="150"/>
        <end position="151"/>
    </location>
</feature>
<feature type="modified residue" description="Phosphothreonine; by host MAP4K1" evidence="2">
    <location>
        <position position="96"/>
    </location>
</feature>
<feature type="modified residue" description="Phosphoserine; by host MAP4K1" evidence="2">
    <location>
        <position position="165"/>
    </location>
</feature>
<evidence type="ECO:0000250" key="1">
    <source>
        <dbReference type="UniProtKB" id="O70897"/>
    </source>
</evidence>
<evidence type="ECO:0000255" key="2">
    <source>
        <dbReference type="HAMAP-Rule" id="MF_04081"/>
    </source>
</evidence>